<organism>
    <name type="scientific">Lactococcus lactis subsp. lactis (strain IL1403)</name>
    <name type="common">Streptococcus lactis</name>
    <dbReference type="NCBI Taxonomy" id="272623"/>
    <lineage>
        <taxon>Bacteria</taxon>
        <taxon>Bacillati</taxon>
        <taxon>Bacillota</taxon>
        <taxon>Bacilli</taxon>
        <taxon>Lactobacillales</taxon>
        <taxon>Streptococcaceae</taxon>
        <taxon>Lactococcus</taxon>
    </lineage>
</organism>
<sequence length="264" mass="29732">MNIKKGKFLETILAEKRLEIAKMPEEQVGKVRQTYNFYDYLKEHSDQLQVIAEVKKASPSLGDINLEVDIVDQAKNYEQAGAAMISVLTDPVFFKGNIEYLCEISENVQIPTLNKDFIIDKKQINRAVNAGATVILLIVAVFENQYPKLQNLYNYALSLGLEVLVETHNKAELEIAHQLGAKIIGVNNRNLKTFEVILQNSVDLTPYFKEDSIYISESGIFSANEAQKVSDTFNGILVGTALMQSENLEKSLKDLKVKRKTNEN</sequence>
<dbReference type="EC" id="4.1.1.48"/>
<dbReference type="EMBL" id="M87483">
    <property type="protein sequence ID" value="AAA25226.1"/>
    <property type="molecule type" value="Genomic_DNA"/>
</dbReference>
<dbReference type="EMBL" id="AE005176">
    <property type="protein sequence ID" value="AAK05565.1"/>
    <property type="molecule type" value="Genomic_DNA"/>
</dbReference>
<dbReference type="PIR" id="S35127">
    <property type="entry name" value="S35127"/>
</dbReference>
<dbReference type="RefSeq" id="NP_267623.1">
    <property type="nucleotide sequence ID" value="NC_002662.1"/>
</dbReference>
<dbReference type="RefSeq" id="WP_010905988.1">
    <property type="nucleotide sequence ID" value="NC_002662.1"/>
</dbReference>
<dbReference type="SMR" id="Q01999"/>
<dbReference type="PaxDb" id="272623-L0051"/>
<dbReference type="EnsemblBacteria" id="AAK05565">
    <property type="protein sequence ID" value="AAK05565"/>
    <property type="gene ID" value="L0051"/>
</dbReference>
<dbReference type="KEGG" id="lla:L0051"/>
<dbReference type="PATRIC" id="fig|272623.7.peg.1577"/>
<dbReference type="eggNOG" id="COG0134">
    <property type="taxonomic scope" value="Bacteria"/>
</dbReference>
<dbReference type="HOGENOM" id="CLU_034247_2_1_9"/>
<dbReference type="OrthoDB" id="9804217at2"/>
<dbReference type="UniPathway" id="UPA00035">
    <property type="reaction ID" value="UER00043"/>
</dbReference>
<dbReference type="Proteomes" id="UP000002196">
    <property type="component" value="Chromosome"/>
</dbReference>
<dbReference type="GO" id="GO:0004425">
    <property type="term" value="F:indole-3-glycerol-phosphate synthase activity"/>
    <property type="evidence" value="ECO:0007669"/>
    <property type="project" value="UniProtKB-UniRule"/>
</dbReference>
<dbReference type="GO" id="GO:0004640">
    <property type="term" value="F:phosphoribosylanthranilate isomerase activity"/>
    <property type="evidence" value="ECO:0007669"/>
    <property type="project" value="TreeGrafter"/>
</dbReference>
<dbReference type="GO" id="GO:0000162">
    <property type="term" value="P:L-tryptophan biosynthetic process"/>
    <property type="evidence" value="ECO:0007669"/>
    <property type="project" value="UniProtKB-UniRule"/>
</dbReference>
<dbReference type="CDD" id="cd00331">
    <property type="entry name" value="IGPS"/>
    <property type="match status" value="1"/>
</dbReference>
<dbReference type="FunFam" id="3.20.20.70:FF:000024">
    <property type="entry name" value="Indole-3-glycerol phosphate synthase"/>
    <property type="match status" value="1"/>
</dbReference>
<dbReference type="Gene3D" id="3.20.20.70">
    <property type="entry name" value="Aldolase class I"/>
    <property type="match status" value="1"/>
</dbReference>
<dbReference type="HAMAP" id="MF_00134_B">
    <property type="entry name" value="IGPS_B"/>
    <property type="match status" value="1"/>
</dbReference>
<dbReference type="InterPro" id="IPR013785">
    <property type="entry name" value="Aldolase_TIM"/>
</dbReference>
<dbReference type="InterPro" id="IPR045186">
    <property type="entry name" value="Indole-3-glycerol_P_synth"/>
</dbReference>
<dbReference type="InterPro" id="IPR013798">
    <property type="entry name" value="Indole-3-glycerol_P_synth_dom"/>
</dbReference>
<dbReference type="InterPro" id="IPR001468">
    <property type="entry name" value="Indole-3-GlycerolPSynthase_CS"/>
</dbReference>
<dbReference type="InterPro" id="IPR011060">
    <property type="entry name" value="RibuloseP-bd_barrel"/>
</dbReference>
<dbReference type="NCBIfam" id="NF001371">
    <property type="entry name" value="PRK00278.1-3"/>
    <property type="match status" value="1"/>
</dbReference>
<dbReference type="PANTHER" id="PTHR22854:SF2">
    <property type="entry name" value="INDOLE-3-GLYCEROL-PHOSPHATE SYNTHASE"/>
    <property type="match status" value="1"/>
</dbReference>
<dbReference type="PANTHER" id="PTHR22854">
    <property type="entry name" value="TRYPTOPHAN BIOSYNTHESIS PROTEIN"/>
    <property type="match status" value="1"/>
</dbReference>
<dbReference type="Pfam" id="PF00218">
    <property type="entry name" value="IGPS"/>
    <property type="match status" value="1"/>
</dbReference>
<dbReference type="SUPFAM" id="SSF51366">
    <property type="entry name" value="Ribulose-phoshate binding barrel"/>
    <property type="match status" value="1"/>
</dbReference>
<dbReference type="PROSITE" id="PS00614">
    <property type="entry name" value="IGPS"/>
    <property type="match status" value="1"/>
</dbReference>
<protein>
    <recommendedName>
        <fullName>Indole-3-glycerol phosphate synthase</fullName>
        <shortName>IGPS</shortName>
        <ecNumber>4.1.1.48</ecNumber>
    </recommendedName>
</protein>
<reference key="1">
    <citation type="journal article" date="1992" name="J. Bacteriol.">
        <title>Tryptophan biosynthesis genes in Lactococcus lactis subsp. lactis.</title>
        <authorList>
            <person name="Bardowski J."/>
            <person name="Ehrlich S.D."/>
            <person name="Chopin A."/>
        </authorList>
    </citation>
    <scope>NUCLEOTIDE SEQUENCE [GENOMIC DNA]</scope>
    <source>
        <strain>IL1403</strain>
    </source>
</reference>
<reference key="2">
    <citation type="journal article" date="2001" name="Genome Res.">
        <title>The complete genome sequence of the lactic acid bacterium Lactococcus lactis ssp. lactis IL1403.</title>
        <authorList>
            <person name="Bolotin A."/>
            <person name="Wincker P."/>
            <person name="Mauger S."/>
            <person name="Jaillon O."/>
            <person name="Malarme K."/>
            <person name="Weissenbach J."/>
            <person name="Ehrlich S.D."/>
            <person name="Sorokin A."/>
        </authorList>
    </citation>
    <scope>NUCLEOTIDE SEQUENCE [LARGE SCALE GENOMIC DNA]</scope>
    <source>
        <strain>IL1403</strain>
    </source>
</reference>
<name>TRPC_LACLA</name>
<feature type="chain" id="PRO_0000154225" description="Indole-3-glycerol phosphate synthase">
    <location>
        <begin position="1"/>
        <end position="264"/>
    </location>
</feature>
<accession>Q01999</accession>
<proteinExistence type="inferred from homology"/>
<gene>
    <name type="primary">trpC</name>
    <name type="ordered locus">LL1467</name>
    <name type="ORF">L0051</name>
</gene>
<keyword id="KW-0028">Amino-acid biosynthesis</keyword>
<keyword id="KW-0057">Aromatic amino acid biosynthesis</keyword>
<keyword id="KW-0210">Decarboxylase</keyword>
<keyword id="KW-0456">Lyase</keyword>
<keyword id="KW-1185">Reference proteome</keyword>
<keyword id="KW-0822">Tryptophan biosynthesis</keyword>
<evidence type="ECO:0000305" key="1"/>
<comment type="catalytic activity">
    <reaction>
        <text>1-(2-carboxyphenylamino)-1-deoxy-D-ribulose 5-phosphate + H(+) = (1S,2R)-1-C-(indol-3-yl)glycerol 3-phosphate + CO2 + H2O</text>
        <dbReference type="Rhea" id="RHEA:23476"/>
        <dbReference type="ChEBI" id="CHEBI:15377"/>
        <dbReference type="ChEBI" id="CHEBI:15378"/>
        <dbReference type="ChEBI" id="CHEBI:16526"/>
        <dbReference type="ChEBI" id="CHEBI:58613"/>
        <dbReference type="ChEBI" id="CHEBI:58866"/>
        <dbReference type="EC" id="4.1.1.48"/>
    </reaction>
</comment>
<comment type="pathway">
    <text>Amino-acid biosynthesis; L-tryptophan biosynthesis; L-tryptophan from chorismate: step 4/5.</text>
</comment>
<comment type="similarity">
    <text evidence="1">Belongs to the TrpC family.</text>
</comment>